<sequence>MDGNMKALIKKPGEPGASFELVPIPKIDKHEVLIKVKAASICGTDVHIYNWDEWAKSRVKPPYVFGHEFSGEVVQVGENVTTVKEGEYVSAETHIVCGKCLPCLTGKEHVCKKTLILGVDTDGCFAEYVKMPAANIWKNPAGMPEDLASIQEPLGNAVHTVLTGMTAGVKVAVVGCGPIGLMAVAVAKASGAAQVIAIDKNEYRLDLALQMGATDIISVEKEDPLKNVSALTNGEGADLVCEMSGHPTAIRQSLKMAANGGRVHVLSLPEHPVCIDMTNDIVFKGLTVQGITGRKMFETWRQVSGLLQSGTIQIKPVITHRFPMEEFEKGFELMRKGQCGKVVLIP</sequence>
<feature type="chain" id="PRO_0000160830" description="L-threonine 3-dehydrogenase">
    <location>
        <begin position="1"/>
        <end position="346"/>
    </location>
</feature>
<feature type="active site" description="Charge relay system" evidence="1">
    <location>
        <position position="44"/>
    </location>
</feature>
<feature type="active site" description="Charge relay system" evidence="1">
    <location>
        <position position="47"/>
    </location>
</feature>
<feature type="binding site" evidence="1">
    <location>
        <position position="42"/>
    </location>
    <ligand>
        <name>Zn(2+)</name>
        <dbReference type="ChEBI" id="CHEBI:29105"/>
        <label>1</label>
        <note>catalytic</note>
    </ligand>
</feature>
<feature type="binding site" evidence="1">
    <location>
        <position position="67"/>
    </location>
    <ligand>
        <name>Zn(2+)</name>
        <dbReference type="ChEBI" id="CHEBI:29105"/>
        <label>1</label>
        <note>catalytic</note>
    </ligand>
</feature>
<feature type="binding site" evidence="1">
    <location>
        <position position="68"/>
    </location>
    <ligand>
        <name>Zn(2+)</name>
        <dbReference type="ChEBI" id="CHEBI:29105"/>
        <label>1</label>
        <note>catalytic</note>
    </ligand>
</feature>
<feature type="binding site" evidence="1">
    <location>
        <position position="97"/>
    </location>
    <ligand>
        <name>Zn(2+)</name>
        <dbReference type="ChEBI" id="CHEBI:29105"/>
        <label>2</label>
    </ligand>
</feature>
<feature type="binding site" evidence="1">
    <location>
        <position position="100"/>
    </location>
    <ligand>
        <name>Zn(2+)</name>
        <dbReference type="ChEBI" id="CHEBI:29105"/>
        <label>2</label>
    </ligand>
</feature>
<feature type="binding site" evidence="1">
    <location>
        <position position="103"/>
    </location>
    <ligand>
        <name>Zn(2+)</name>
        <dbReference type="ChEBI" id="CHEBI:29105"/>
        <label>2</label>
    </ligand>
</feature>
<feature type="binding site" evidence="1">
    <location>
        <position position="111"/>
    </location>
    <ligand>
        <name>Zn(2+)</name>
        <dbReference type="ChEBI" id="CHEBI:29105"/>
        <label>2</label>
    </ligand>
</feature>
<feature type="binding site" evidence="1">
    <location>
        <position position="179"/>
    </location>
    <ligand>
        <name>NAD(+)</name>
        <dbReference type="ChEBI" id="CHEBI:57540"/>
    </ligand>
</feature>
<feature type="binding site" evidence="1">
    <location>
        <position position="199"/>
    </location>
    <ligand>
        <name>NAD(+)</name>
        <dbReference type="ChEBI" id="CHEBI:57540"/>
    </ligand>
</feature>
<feature type="binding site" evidence="1">
    <location>
        <position position="204"/>
    </location>
    <ligand>
        <name>NAD(+)</name>
        <dbReference type="ChEBI" id="CHEBI:57540"/>
    </ligand>
</feature>
<feature type="binding site" evidence="1">
    <location>
        <begin position="266"/>
        <end position="268"/>
    </location>
    <ligand>
        <name>NAD(+)</name>
        <dbReference type="ChEBI" id="CHEBI:57540"/>
    </ligand>
</feature>
<feature type="binding site" evidence="1">
    <location>
        <begin position="291"/>
        <end position="292"/>
    </location>
    <ligand>
        <name>NAD(+)</name>
        <dbReference type="ChEBI" id="CHEBI:57540"/>
    </ligand>
</feature>
<feature type="site" description="Important for catalytic activity for the proton relay mechanism but does not participate directly in the coordination of zinc atom" evidence="1">
    <location>
        <position position="152"/>
    </location>
</feature>
<keyword id="KW-0963">Cytoplasm</keyword>
<keyword id="KW-0479">Metal-binding</keyword>
<keyword id="KW-0520">NAD</keyword>
<keyword id="KW-0560">Oxidoreductase</keyword>
<keyword id="KW-1185">Reference proteome</keyword>
<keyword id="KW-0862">Zinc</keyword>
<evidence type="ECO:0000255" key="1">
    <source>
        <dbReference type="HAMAP-Rule" id="MF_00627"/>
    </source>
</evidence>
<dbReference type="EC" id="1.1.1.103" evidence="1"/>
<dbReference type="EMBL" id="CP000002">
    <property type="protein sequence ID" value="AAU23458.1"/>
    <property type="molecule type" value="Genomic_DNA"/>
</dbReference>
<dbReference type="EMBL" id="AE017333">
    <property type="protein sequence ID" value="AAU40817.1"/>
    <property type="molecule type" value="Genomic_DNA"/>
</dbReference>
<dbReference type="SMR" id="Q65JE7"/>
<dbReference type="STRING" id="279010.BL03658"/>
<dbReference type="KEGG" id="bld:BLi01923"/>
<dbReference type="KEGG" id="bli:BL03658"/>
<dbReference type="eggNOG" id="COG1063">
    <property type="taxonomic scope" value="Bacteria"/>
</dbReference>
<dbReference type="HOGENOM" id="CLU_026673_11_0_9"/>
<dbReference type="UniPathway" id="UPA00046">
    <property type="reaction ID" value="UER00505"/>
</dbReference>
<dbReference type="Proteomes" id="UP000000606">
    <property type="component" value="Chromosome"/>
</dbReference>
<dbReference type="GO" id="GO:0005737">
    <property type="term" value="C:cytoplasm"/>
    <property type="evidence" value="ECO:0007669"/>
    <property type="project" value="UniProtKB-SubCell"/>
</dbReference>
<dbReference type="GO" id="GO:0008743">
    <property type="term" value="F:L-threonine 3-dehydrogenase activity"/>
    <property type="evidence" value="ECO:0007669"/>
    <property type="project" value="UniProtKB-UniRule"/>
</dbReference>
<dbReference type="GO" id="GO:0008270">
    <property type="term" value="F:zinc ion binding"/>
    <property type="evidence" value="ECO:0007669"/>
    <property type="project" value="UniProtKB-UniRule"/>
</dbReference>
<dbReference type="GO" id="GO:0019518">
    <property type="term" value="P:L-threonine catabolic process to glycine"/>
    <property type="evidence" value="ECO:0007669"/>
    <property type="project" value="UniProtKB-UniPathway"/>
</dbReference>
<dbReference type="CDD" id="cd05281">
    <property type="entry name" value="TDH"/>
    <property type="match status" value="1"/>
</dbReference>
<dbReference type="Gene3D" id="3.90.180.10">
    <property type="entry name" value="Medium-chain alcohol dehydrogenases, catalytic domain"/>
    <property type="match status" value="1"/>
</dbReference>
<dbReference type="Gene3D" id="3.40.50.720">
    <property type="entry name" value="NAD(P)-binding Rossmann-like Domain"/>
    <property type="match status" value="1"/>
</dbReference>
<dbReference type="HAMAP" id="MF_00627">
    <property type="entry name" value="Thr_dehydrog"/>
    <property type="match status" value="1"/>
</dbReference>
<dbReference type="InterPro" id="IPR013149">
    <property type="entry name" value="ADH-like_C"/>
</dbReference>
<dbReference type="InterPro" id="IPR013154">
    <property type="entry name" value="ADH-like_N"/>
</dbReference>
<dbReference type="InterPro" id="IPR002328">
    <property type="entry name" value="ADH_Zn_CS"/>
</dbReference>
<dbReference type="InterPro" id="IPR011032">
    <property type="entry name" value="GroES-like_sf"/>
</dbReference>
<dbReference type="InterPro" id="IPR004627">
    <property type="entry name" value="L-Threonine_3-DHase"/>
</dbReference>
<dbReference type="InterPro" id="IPR036291">
    <property type="entry name" value="NAD(P)-bd_dom_sf"/>
</dbReference>
<dbReference type="InterPro" id="IPR020843">
    <property type="entry name" value="PKS_ER"/>
</dbReference>
<dbReference type="InterPro" id="IPR050129">
    <property type="entry name" value="Zn_alcohol_dh"/>
</dbReference>
<dbReference type="NCBIfam" id="NF003808">
    <property type="entry name" value="PRK05396.1"/>
    <property type="match status" value="1"/>
</dbReference>
<dbReference type="NCBIfam" id="TIGR00692">
    <property type="entry name" value="tdh"/>
    <property type="match status" value="1"/>
</dbReference>
<dbReference type="PANTHER" id="PTHR43401">
    <property type="entry name" value="L-THREONINE 3-DEHYDROGENASE"/>
    <property type="match status" value="1"/>
</dbReference>
<dbReference type="PANTHER" id="PTHR43401:SF2">
    <property type="entry name" value="L-THREONINE 3-DEHYDROGENASE"/>
    <property type="match status" value="1"/>
</dbReference>
<dbReference type="Pfam" id="PF08240">
    <property type="entry name" value="ADH_N"/>
    <property type="match status" value="1"/>
</dbReference>
<dbReference type="Pfam" id="PF00107">
    <property type="entry name" value="ADH_zinc_N"/>
    <property type="match status" value="1"/>
</dbReference>
<dbReference type="SMART" id="SM00829">
    <property type="entry name" value="PKS_ER"/>
    <property type="match status" value="1"/>
</dbReference>
<dbReference type="SUPFAM" id="SSF50129">
    <property type="entry name" value="GroES-like"/>
    <property type="match status" value="1"/>
</dbReference>
<dbReference type="SUPFAM" id="SSF51735">
    <property type="entry name" value="NAD(P)-binding Rossmann-fold domains"/>
    <property type="match status" value="1"/>
</dbReference>
<dbReference type="PROSITE" id="PS00059">
    <property type="entry name" value="ADH_ZINC"/>
    <property type="match status" value="1"/>
</dbReference>
<gene>
    <name evidence="1" type="primary">tdh</name>
    <name type="ordered locus">BLi01923</name>
    <name type="ordered locus">BL03658</name>
</gene>
<comment type="function">
    <text evidence="1">Catalyzes the NAD(+)-dependent oxidation of L-threonine to 2-amino-3-ketobutyrate.</text>
</comment>
<comment type="catalytic activity">
    <reaction evidence="1">
        <text>L-threonine + NAD(+) = (2S)-2-amino-3-oxobutanoate + NADH + H(+)</text>
        <dbReference type="Rhea" id="RHEA:13161"/>
        <dbReference type="ChEBI" id="CHEBI:15378"/>
        <dbReference type="ChEBI" id="CHEBI:57540"/>
        <dbReference type="ChEBI" id="CHEBI:57926"/>
        <dbReference type="ChEBI" id="CHEBI:57945"/>
        <dbReference type="ChEBI" id="CHEBI:78948"/>
        <dbReference type="EC" id="1.1.1.103"/>
    </reaction>
</comment>
<comment type="cofactor">
    <cofactor evidence="1">
        <name>Zn(2+)</name>
        <dbReference type="ChEBI" id="CHEBI:29105"/>
    </cofactor>
    <text evidence="1">Binds 2 Zn(2+) ions per subunit.</text>
</comment>
<comment type="pathway">
    <text evidence="1">Amino-acid degradation; L-threonine degradation via oxydo-reductase pathway; glycine from L-threonine: step 1/2.</text>
</comment>
<comment type="subunit">
    <text evidence="1">Homotetramer.</text>
</comment>
<comment type="subcellular location">
    <subcellularLocation>
        <location evidence="1">Cytoplasm</location>
    </subcellularLocation>
</comment>
<comment type="similarity">
    <text evidence="1">Belongs to the zinc-containing alcohol dehydrogenase family.</text>
</comment>
<accession>Q65JE7</accession>
<accession>Q62UV1</accession>
<protein>
    <recommendedName>
        <fullName evidence="1">L-threonine 3-dehydrogenase</fullName>
        <shortName evidence="1">TDH</shortName>
        <ecNumber evidence="1">1.1.1.103</ecNumber>
    </recommendedName>
</protein>
<organism>
    <name type="scientific">Bacillus licheniformis (strain ATCC 14580 / DSM 13 / JCM 2505 / CCUG 7422 / NBRC 12200 / NCIMB 9375 / NCTC 10341 / NRRL NRS-1264 / Gibson 46)</name>
    <dbReference type="NCBI Taxonomy" id="279010"/>
    <lineage>
        <taxon>Bacteria</taxon>
        <taxon>Bacillati</taxon>
        <taxon>Bacillota</taxon>
        <taxon>Bacilli</taxon>
        <taxon>Bacillales</taxon>
        <taxon>Bacillaceae</taxon>
        <taxon>Bacillus</taxon>
    </lineage>
</organism>
<reference key="1">
    <citation type="journal article" date="2004" name="J. Mol. Microbiol. Biotechnol.">
        <title>The complete genome sequence of Bacillus licheniformis DSM13, an organism with great industrial potential.</title>
        <authorList>
            <person name="Veith B."/>
            <person name="Herzberg C."/>
            <person name="Steckel S."/>
            <person name="Feesche J."/>
            <person name="Maurer K.H."/>
            <person name="Ehrenreich P."/>
            <person name="Baeumer S."/>
            <person name="Henne A."/>
            <person name="Liesegang H."/>
            <person name="Merkl R."/>
            <person name="Ehrenreich A."/>
            <person name="Gottschalk G."/>
        </authorList>
    </citation>
    <scope>NUCLEOTIDE SEQUENCE [LARGE SCALE GENOMIC DNA]</scope>
    <source>
        <strain>ATCC 14580 / DSM 13 / JCM 2505 / CCUG 7422 / NBRC 12200 / NCIMB 9375 / NCTC 10341 / NRRL NRS-1264 / Gibson 46</strain>
    </source>
</reference>
<reference key="2">
    <citation type="journal article" date="2004" name="Genome Biol.">
        <title>Complete genome sequence of the industrial bacterium Bacillus licheniformis and comparisons with closely related Bacillus species.</title>
        <authorList>
            <person name="Rey M.W."/>
            <person name="Ramaiya P."/>
            <person name="Nelson B.A."/>
            <person name="Brody-Karpin S.D."/>
            <person name="Zaretsky E.J."/>
            <person name="Tang M."/>
            <person name="Lopez de Leon A."/>
            <person name="Xiang H."/>
            <person name="Gusti V."/>
            <person name="Clausen I.G."/>
            <person name="Olsen P.B."/>
            <person name="Rasmussen M.D."/>
            <person name="Andersen J.T."/>
            <person name="Joergensen P.L."/>
            <person name="Larsen T.S."/>
            <person name="Sorokin A."/>
            <person name="Bolotin A."/>
            <person name="Lapidus A."/>
            <person name="Galleron N."/>
            <person name="Ehrlich S.D."/>
            <person name="Berka R.M."/>
        </authorList>
    </citation>
    <scope>NUCLEOTIDE SEQUENCE [LARGE SCALE GENOMIC DNA]</scope>
    <source>
        <strain>ATCC 14580 / DSM 13 / JCM 2505 / CCUG 7422 / NBRC 12200 / NCIMB 9375 / NCTC 10341 / NRRL NRS-1264 / Gibson 46</strain>
    </source>
</reference>
<proteinExistence type="inferred from homology"/>
<name>TDH_BACLD</name>